<keyword id="KW-0328">Glycosyltransferase</keyword>
<keyword id="KW-0441">Lipid A biosynthesis</keyword>
<keyword id="KW-0444">Lipid biosynthesis</keyword>
<keyword id="KW-0443">Lipid metabolism</keyword>
<keyword id="KW-0808">Transferase</keyword>
<feature type="chain" id="PRO_1000049417" description="Lipid-A-disaccharide synthase">
    <location>
        <begin position="1"/>
        <end position="384"/>
    </location>
</feature>
<organism>
    <name type="scientific">Shewanella putrefaciens (strain CN-32 / ATCC BAA-453)</name>
    <dbReference type="NCBI Taxonomy" id="319224"/>
    <lineage>
        <taxon>Bacteria</taxon>
        <taxon>Pseudomonadati</taxon>
        <taxon>Pseudomonadota</taxon>
        <taxon>Gammaproteobacteria</taxon>
        <taxon>Alteromonadales</taxon>
        <taxon>Shewanellaceae</taxon>
        <taxon>Shewanella</taxon>
    </lineage>
</organism>
<protein>
    <recommendedName>
        <fullName evidence="1">Lipid-A-disaccharide synthase</fullName>
        <ecNumber evidence="1">2.4.1.182</ecNumber>
    </recommendedName>
</protein>
<accession>A4Y556</accession>
<dbReference type="EC" id="2.4.1.182" evidence="1"/>
<dbReference type="EMBL" id="CP000681">
    <property type="protein sequence ID" value="ABP75089.1"/>
    <property type="molecule type" value="Genomic_DNA"/>
</dbReference>
<dbReference type="SMR" id="A4Y556"/>
<dbReference type="STRING" id="319224.Sputcn32_1361"/>
<dbReference type="CAZy" id="GT19">
    <property type="family name" value="Glycosyltransferase Family 19"/>
</dbReference>
<dbReference type="KEGG" id="spc:Sputcn32_1361"/>
<dbReference type="eggNOG" id="COG0763">
    <property type="taxonomic scope" value="Bacteria"/>
</dbReference>
<dbReference type="HOGENOM" id="CLU_036577_3_0_6"/>
<dbReference type="UniPathway" id="UPA00973"/>
<dbReference type="GO" id="GO:0016020">
    <property type="term" value="C:membrane"/>
    <property type="evidence" value="ECO:0007669"/>
    <property type="project" value="GOC"/>
</dbReference>
<dbReference type="GO" id="GO:0008915">
    <property type="term" value="F:lipid-A-disaccharide synthase activity"/>
    <property type="evidence" value="ECO:0007669"/>
    <property type="project" value="UniProtKB-UniRule"/>
</dbReference>
<dbReference type="GO" id="GO:0005543">
    <property type="term" value="F:phospholipid binding"/>
    <property type="evidence" value="ECO:0007669"/>
    <property type="project" value="TreeGrafter"/>
</dbReference>
<dbReference type="GO" id="GO:0009245">
    <property type="term" value="P:lipid A biosynthetic process"/>
    <property type="evidence" value="ECO:0007669"/>
    <property type="project" value="UniProtKB-UniRule"/>
</dbReference>
<dbReference type="CDD" id="cd01635">
    <property type="entry name" value="Glycosyltransferase_GTB-type"/>
    <property type="match status" value="1"/>
</dbReference>
<dbReference type="HAMAP" id="MF_00392">
    <property type="entry name" value="LpxB"/>
    <property type="match status" value="1"/>
</dbReference>
<dbReference type="InterPro" id="IPR003835">
    <property type="entry name" value="Glyco_trans_19"/>
</dbReference>
<dbReference type="NCBIfam" id="TIGR00215">
    <property type="entry name" value="lpxB"/>
    <property type="match status" value="1"/>
</dbReference>
<dbReference type="PANTHER" id="PTHR30372">
    <property type="entry name" value="LIPID-A-DISACCHARIDE SYNTHASE"/>
    <property type="match status" value="1"/>
</dbReference>
<dbReference type="PANTHER" id="PTHR30372:SF4">
    <property type="entry name" value="LIPID-A-DISACCHARIDE SYNTHASE, MITOCHONDRIAL-RELATED"/>
    <property type="match status" value="1"/>
</dbReference>
<dbReference type="Pfam" id="PF02684">
    <property type="entry name" value="LpxB"/>
    <property type="match status" value="1"/>
</dbReference>
<dbReference type="SUPFAM" id="SSF53756">
    <property type="entry name" value="UDP-Glycosyltransferase/glycogen phosphorylase"/>
    <property type="match status" value="1"/>
</dbReference>
<sequence length="384" mass="42409">MSKKSQLVFAMVAGELSGDILGAGLMAALQKSHPDARFVGIGGPRMEALGFESLFAMEELAVMGIVEVLSRLPRLLKVRASLIKDITALKPDCFIGIDAPDFNIGLELKLKARGIKTVHYVSPSVWAWRPKRIFKIAKATHMVLSLLPFEKAFYDKHQVPCTFVGHTLADDIPLRSDKAAARQLLELDADAEYLAILPGSRGGELKQLAEPFVKAALLIKENFPDIRFVTPLVNQKRRDQFEQALKDHAPDLEIHMVEGKSREVMTAADGILLASGTATLEAMLVKRPMVVAYRVSPLTYRIAKSMMQVNRFSLPNLLAGKDVVPELIQDDCTPEKIAAAVTVELNRDFAPLNAEFERLHQMLRCDASQKAADAVMRLVETKEG</sequence>
<evidence type="ECO:0000255" key="1">
    <source>
        <dbReference type="HAMAP-Rule" id="MF_00392"/>
    </source>
</evidence>
<comment type="function">
    <text evidence="1">Condensation of UDP-2,3-diacylglucosamine and 2,3-diacylglucosamine-1-phosphate to form lipid A disaccharide, a precursor of lipid A, a phosphorylated glycolipid that anchors the lipopolysaccharide to the outer membrane of the cell.</text>
</comment>
<comment type="catalytic activity">
    <reaction evidence="1">
        <text>a lipid X + a UDP-2-N,3-O-bis[(3R)-3-hydroxyacyl]-alpha-D-glucosamine = a lipid A disaccharide + UDP + H(+)</text>
        <dbReference type="Rhea" id="RHEA:67828"/>
        <dbReference type="ChEBI" id="CHEBI:15378"/>
        <dbReference type="ChEBI" id="CHEBI:58223"/>
        <dbReference type="ChEBI" id="CHEBI:137748"/>
        <dbReference type="ChEBI" id="CHEBI:176338"/>
        <dbReference type="ChEBI" id="CHEBI:176343"/>
        <dbReference type="EC" id="2.4.1.182"/>
    </reaction>
</comment>
<comment type="pathway">
    <text evidence="1">Bacterial outer membrane biogenesis; LPS lipid A biosynthesis.</text>
</comment>
<comment type="similarity">
    <text evidence="1">Belongs to the LpxB family.</text>
</comment>
<gene>
    <name evidence="1" type="primary">lpxB</name>
    <name type="ordered locus">Sputcn32_1361</name>
</gene>
<name>LPXB_SHEPC</name>
<proteinExistence type="inferred from homology"/>
<reference key="1">
    <citation type="submission" date="2007-04" db="EMBL/GenBank/DDBJ databases">
        <title>Complete sequence of Shewanella putrefaciens CN-32.</title>
        <authorList>
            <consortium name="US DOE Joint Genome Institute"/>
            <person name="Copeland A."/>
            <person name="Lucas S."/>
            <person name="Lapidus A."/>
            <person name="Barry K."/>
            <person name="Detter J.C."/>
            <person name="Glavina del Rio T."/>
            <person name="Hammon N."/>
            <person name="Israni S."/>
            <person name="Dalin E."/>
            <person name="Tice H."/>
            <person name="Pitluck S."/>
            <person name="Chain P."/>
            <person name="Malfatti S."/>
            <person name="Shin M."/>
            <person name="Vergez L."/>
            <person name="Schmutz J."/>
            <person name="Larimer F."/>
            <person name="Land M."/>
            <person name="Hauser L."/>
            <person name="Kyrpides N."/>
            <person name="Mikhailova N."/>
            <person name="Romine M.F."/>
            <person name="Fredrickson J."/>
            <person name="Tiedje J."/>
            <person name="Richardson P."/>
        </authorList>
    </citation>
    <scope>NUCLEOTIDE SEQUENCE [LARGE SCALE GENOMIC DNA]</scope>
    <source>
        <strain>CN-32 / ATCC BAA-453</strain>
    </source>
</reference>